<proteinExistence type="inferred from homology"/>
<gene>
    <name type="ordered locus">Os03g0690000</name>
    <name type="ordered locus">LOC_Os03g48390</name>
    <name type="ORF">OsJ_011680</name>
    <name type="ORF">OSJNBa0022C08.7</name>
</gene>
<evidence type="ECO:0000305" key="1"/>
<name>COSA_ORYSJ</name>
<keyword id="KW-1185">Reference proteome</keyword>
<accession>Q6AVK1</accession>
<accession>A0A0P0W1I9</accession>
<sequence>MNVEEEVGKLKEEIQRLGQKQPDGSYKVTFGVIFNDDRCANIFEALVGTLRAAKKRKIVKYDGELLLQGAHDNVEITLLPPPAVAAA</sequence>
<protein>
    <recommendedName>
        <fullName>Costars family protein</fullName>
    </recommendedName>
</protein>
<dbReference type="EMBL" id="AC097277">
    <property type="protein sequence ID" value="AAT81723.1"/>
    <property type="molecule type" value="Genomic_DNA"/>
</dbReference>
<dbReference type="EMBL" id="DP000009">
    <property type="protein sequence ID" value="ABF98283.1"/>
    <property type="molecule type" value="Genomic_DNA"/>
</dbReference>
<dbReference type="EMBL" id="AP008209">
    <property type="protein sequence ID" value="BAF12864.1"/>
    <property type="molecule type" value="Genomic_DNA"/>
</dbReference>
<dbReference type="EMBL" id="AP014959">
    <property type="protein sequence ID" value="BAS85839.1"/>
    <property type="molecule type" value="Genomic_DNA"/>
</dbReference>
<dbReference type="EMBL" id="CM000140">
    <property type="protein sequence ID" value="EAZ28197.1"/>
    <property type="molecule type" value="Genomic_DNA"/>
</dbReference>
<dbReference type="EMBL" id="AK062756">
    <property type="protein sequence ID" value="BAG88433.1"/>
    <property type="molecule type" value="mRNA"/>
</dbReference>
<dbReference type="RefSeq" id="XP_015628769.1">
    <property type="nucleotide sequence ID" value="XM_015773283.1"/>
</dbReference>
<dbReference type="SMR" id="Q6AVK1"/>
<dbReference type="FunCoup" id="Q6AVK1">
    <property type="interactions" value="833"/>
</dbReference>
<dbReference type="STRING" id="39947.Q6AVK1"/>
<dbReference type="PaxDb" id="39947-Q6AVK1"/>
<dbReference type="EnsemblPlants" id="Os03t0690000-01">
    <property type="protein sequence ID" value="Os03t0690000-01"/>
    <property type="gene ID" value="Os03g0690000"/>
</dbReference>
<dbReference type="Gramene" id="Os03t0690000-01">
    <property type="protein sequence ID" value="Os03t0690000-01"/>
    <property type="gene ID" value="Os03g0690000"/>
</dbReference>
<dbReference type="KEGG" id="dosa:Os03g0690000"/>
<dbReference type="eggNOG" id="KOG3376">
    <property type="taxonomic scope" value="Eukaryota"/>
</dbReference>
<dbReference type="HOGENOM" id="CLU_173478_0_0_1"/>
<dbReference type="InParanoid" id="Q6AVK1"/>
<dbReference type="OMA" id="QRVHDNV"/>
<dbReference type="OrthoDB" id="9871914at2759"/>
<dbReference type="Proteomes" id="UP000000763">
    <property type="component" value="Chromosome 3"/>
</dbReference>
<dbReference type="Proteomes" id="UP000007752">
    <property type="component" value="Chromosome 3"/>
</dbReference>
<dbReference type="Proteomes" id="UP000059680">
    <property type="component" value="Chromosome 3"/>
</dbReference>
<dbReference type="GO" id="GO:0032970">
    <property type="term" value="P:regulation of actin filament-based process"/>
    <property type="evidence" value="ECO:0000318"/>
    <property type="project" value="GO_Central"/>
</dbReference>
<dbReference type="FunFam" id="1.10.10.1540:FF:000002">
    <property type="entry name" value="costars family protein ABRACL"/>
    <property type="match status" value="1"/>
</dbReference>
<dbReference type="Gene3D" id="1.10.10.1540">
    <property type="entry name" value="Costar domain"/>
    <property type="match status" value="1"/>
</dbReference>
<dbReference type="InterPro" id="IPR044302">
    <property type="entry name" value="Costars"/>
</dbReference>
<dbReference type="InterPro" id="IPR027817">
    <property type="entry name" value="Costars_dom"/>
</dbReference>
<dbReference type="InterPro" id="IPR038095">
    <property type="entry name" value="Costars_sf"/>
</dbReference>
<dbReference type="PANTHER" id="PTHR46334">
    <property type="entry name" value="COSTARS FAMILY PROTEIN ABRACL"/>
    <property type="match status" value="1"/>
</dbReference>
<dbReference type="PANTHER" id="PTHR46334:SF1">
    <property type="entry name" value="COSTARS FAMILY PROTEIN ABRACL"/>
    <property type="match status" value="1"/>
</dbReference>
<dbReference type="Pfam" id="PF14705">
    <property type="entry name" value="Costars"/>
    <property type="match status" value="1"/>
</dbReference>
<dbReference type="SMART" id="SM01283">
    <property type="entry name" value="Costars"/>
    <property type="match status" value="1"/>
</dbReference>
<reference key="1">
    <citation type="journal article" date="2005" name="Genome Res.">
        <title>Sequence, annotation, and analysis of synteny between rice chromosome 3 and diverged grass species.</title>
        <authorList>
            <consortium name="The rice chromosome 3 sequencing consortium"/>
            <person name="Buell C.R."/>
            <person name="Yuan Q."/>
            <person name="Ouyang S."/>
            <person name="Liu J."/>
            <person name="Zhu W."/>
            <person name="Wang A."/>
            <person name="Maiti R."/>
            <person name="Haas B."/>
            <person name="Wortman J."/>
            <person name="Pertea M."/>
            <person name="Jones K.M."/>
            <person name="Kim M."/>
            <person name="Overton L."/>
            <person name="Tsitrin T."/>
            <person name="Fadrosh D."/>
            <person name="Bera J."/>
            <person name="Weaver B."/>
            <person name="Jin S."/>
            <person name="Johri S."/>
            <person name="Reardon M."/>
            <person name="Webb K."/>
            <person name="Hill J."/>
            <person name="Moffat K."/>
            <person name="Tallon L."/>
            <person name="Van Aken S."/>
            <person name="Lewis M."/>
            <person name="Utterback T."/>
            <person name="Feldblyum T."/>
            <person name="Zismann V."/>
            <person name="Iobst S."/>
            <person name="Hsiao J."/>
            <person name="de Vazeille A.R."/>
            <person name="Salzberg S.L."/>
            <person name="White O."/>
            <person name="Fraser C.M."/>
            <person name="Yu Y."/>
            <person name="Kim H."/>
            <person name="Rambo T."/>
            <person name="Currie J."/>
            <person name="Collura K."/>
            <person name="Kernodle-Thompson S."/>
            <person name="Wei F."/>
            <person name="Kudrna K."/>
            <person name="Ammiraju J.S.S."/>
            <person name="Luo M."/>
            <person name="Goicoechea J.L."/>
            <person name="Wing R.A."/>
            <person name="Henry D."/>
            <person name="Oates R."/>
            <person name="Palmer M."/>
            <person name="Pries G."/>
            <person name="Saski C."/>
            <person name="Simmons J."/>
            <person name="Soderlund C."/>
            <person name="Nelson W."/>
            <person name="de la Bastide M."/>
            <person name="Spiegel L."/>
            <person name="Nascimento L."/>
            <person name="Huang E."/>
            <person name="Preston R."/>
            <person name="Zutavern T."/>
            <person name="Palmer L."/>
            <person name="O'Shaughnessy A."/>
            <person name="Dike S."/>
            <person name="McCombie W.R."/>
            <person name="Minx P."/>
            <person name="Cordum H."/>
            <person name="Wilson R."/>
            <person name="Jin W."/>
            <person name="Lee H.R."/>
            <person name="Jiang J."/>
            <person name="Jackson S."/>
        </authorList>
    </citation>
    <scope>NUCLEOTIDE SEQUENCE [LARGE SCALE GENOMIC DNA]</scope>
    <source>
        <strain>cv. Nipponbare</strain>
    </source>
</reference>
<reference key="2">
    <citation type="journal article" date="2005" name="Nature">
        <title>The map-based sequence of the rice genome.</title>
        <authorList>
            <consortium name="International rice genome sequencing project (IRGSP)"/>
        </authorList>
    </citation>
    <scope>NUCLEOTIDE SEQUENCE [LARGE SCALE GENOMIC DNA]</scope>
    <source>
        <strain>cv. Nipponbare</strain>
    </source>
</reference>
<reference key="3">
    <citation type="journal article" date="2008" name="Nucleic Acids Res.">
        <title>The rice annotation project database (RAP-DB): 2008 update.</title>
        <authorList>
            <consortium name="The rice annotation project (RAP)"/>
        </authorList>
    </citation>
    <scope>GENOME REANNOTATION</scope>
    <source>
        <strain>cv. Nipponbare</strain>
    </source>
</reference>
<reference key="4">
    <citation type="journal article" date="2013" name="Rice">
        <title>Improvement of the Oryza sativa Nipponbare reference genome using next generation sequence and optical map data.</title>
        <authorList>
            <person name="Kawahara Y."/>
            <person name="de la Bastide M."/>
            <person name="Hamilton J.P."/>
            <person name="Kanamori H."/>
            <person name="McCombie W.R."/>
            <person name="Ouyang S."/>
            <person name="Schwartz D.C."/>
            <person name="Tanaka T."/>
            <person name="Wu J."/>
            <person name="Zhou S."/>
            <person name="Childs K.L."/>
            <person name="Davidson R.M."/>
            <person name="Lin H."/>
            <person name="Quesada-Ocampo L."/>
            <person name="Vaillancourt B."/>
            <person name="Sakai H."/>
            <person name="Lee S.S."/>
            <person name="Kim J."/>
            <person name="Numa H."/>
            <person name="Itoh T."/>
            <person name="Buell C.R."/>
            <person name="Matsumoto T."/>
        </authorList>
    </citation>
    <scope>GENOME REANNOTATION</scope>
    <source>
        <strain>cv. Nipponbare</strain>
    </source>
</reference>
<reference key="5">
    <citation type="journal article" date="2005" name="PLoS Biol.">
        <title>The genomes of Oryza sativa: a history of duplications.</title>
        <authorList>
            <person name="Yu J."/>
            <person name="Wang J."/>
            <person name="Lin W."/>
            <person name="Li S."/>
            <person name="Li H."/>
            <person name="Zhou J."/>
            <person name="Ni P."/>
            <person name="Dong W."/>
            <person name="Hu S."/>
            <person name="Zeng C."/>
            <person name="Zhang J."/>
            <person name="Zhang Y."/>
            <person name="Li R."/>
            <person name="Xu Z."/>
            <person name="Li S."/>
            <person name="Li X."/>
            <person name="Zheng H."/>
            <person name="Cong L."/>
            <person name="Lin L."/>
            <person name="Yin J."/>
            <person name="Geng J."/>
            <person name="Li G."/>
            <person name="Shi J."/>
            <person name="Liu J."/>
            <person name="Lv H."/>
            <person name="Li J."/>
            <person name="Wang J."/>
            <person name="Deng Y."/>
            <person name="Ran L."/>
            <person name="Shi X."/>
            <person name="Wang X."/>
            <person name="Wu Q."/>
            <person name="Li C."/>
            <person name="Ren X."/>
            <person name="Wang J."/>
            <person name="Wang X."/>
            <person name="Li D."/>
            <person name="Liu D."/>
            <person name="Zhang X."/>
            <person name="Ji Z."/>
            <person name="Zhao W."/>
            <person name="Sun Y."/>
            <person name="Zhang Z."/>
            <person name="Bao J."/>
            <person name="Han Y."/>
            <person name="Dong L."/>
            <person name="Ji J."/>
            <person name="Chen P."/>
            <person name="Wu S."/>
            <person name="Liu J."/>
            <person name="Xiao Y."/>
            <person name="Bu D."/>
            <person name="Tan J."/>
            <person name="Yang L."/>
            <person name="Ye C."/>
            <person name="Zhang J."/>
            <person name="Xu J."/>
            <person name="Zhou Y."/>
            <person name="Yu Y."/>
            <person name="Zhang B."/>
            <person name="Zhuang S."/>
            <person name="Wei H."/>
            <person name="Liu B."/>
            <person name="Lei M."/>
            <person name="Yu H."/>
            <person name="Li Y."/>
            <person name="Xu H."/>
            <person name="Wei S."/>
            <person name="He X."/>
            <person name="Fang L."/>
            <person name="Zhang Z."/>
            <person name="Zhang Y."/>
            <person name="Huang X."/>
            <person name="Su Z."/>
            <person name="Tong W."/>
            <person name="Li J."/>
            <person name="Tong Z."/>
            <person name="Li S."/>
            <person name="Ye J."/>
            <person name="Wang L."/>
            <person name="Fang L."/>
            <person name="Lei T."/>
            <person name="Chen C.-S."/>
            <person name="Chen H.-C."/>
            <person name="Xu Z."/>
            <person name="Li H."/>
            <person name="Huang H."/>
            <person name="Zhang F."/>
            <person name="Xu H."/>
            <person name="Li N."/>
            <person name="Zhao C."/>
            <person name="Li S."/>
            <person name="Dong L."/>
            <person name="Huang Y."/>
            <person name="Li L."/>
            <person name="Xi Y."/>
            <person name="Qi Q."/>
            <person name="Li W."/>
            <person name="Zhang B."/>
            <person name="Hu W."/>
            <person name="Zhang Y."/>
            <person name="Tian X."/>
            <person name="Jiao Y."/>
            <person name="Liang X."/>
            <person name="Jin J."/>
            <person name="Gao L."/>
            <person name="Zheng W."/>
            <person name="Hao B."/>
            <person name="Liu S.-M."/>
            <person name="Wang W."/>
            <person name="Yuan L."/>
            <person name="Cao M."/>
            <person name="McDermott J."/>
            <person name="Samudrala R."/>
            <person name="Wang J."/>
            <person name="Wong G.K.-S."/>
            <person name="Yang H."/>
        </authorList>
    </citation>
    <scope>NUCLEOTIDE SEQUENCE [LARGE SCALE GENOMIC DNA]</scope>
    <source>
        <strain>cv. Nipponbare</strain>
    </source>
</reference>
<reference key="6">
    <citation type="journal article" date="2003" name="Science">
        <title>Collection, mapping, and annotation of over 28,000 cDNA clones from japonica rice.</title>
        <authorList>
            <consortium name="The rice full-length cDNA consortium"/>
        </authorList>
    </citation>
    <scope>NUCLEOTIDE SEQUENCE [LARGE SCALE MRNA]</scope>
    <source>
        <strain>cv. Nipponbare</strain>
    </source>
</reference>
<comment type="similarity">
    <text evidence="1">Belongs to the costars family.</text>
</comment>
<organism>
    <name type="scientific">Oryza sativa subsp. japonica</name>
    <name type="common">Rice</name>
    <dbReference type="NCBI Taxonomy" id="39947"/>
    <lineage>
        <taxon>Eukaryota</taxon>
        <taxon>Viridiplantae</taxon>
        <taxon>Streptophyta</taxon>
        <taxon>Embryophyta</taxon>
        <taxon>Tracheophyta</taxon>
        <taxon>Spermatophyta</taxon>
        <taxon>Magnoliopsida</taxon>
        <taxon>Liliopsida</taxon>
        <taxon>Poales</taxon>
        <taxon>Poaceae</taxon>
        <taxon>BOP clade</taxon>
        <taxon>Oryzoideae</taxon>
        <taxon>Oryzeae</taxon>
        <taxon>Oryzinae</taxon>
        <taxon>Oryza</taxon>
        <taxon>Oryza sativa</taxon>
    </lineage>
</organism>
<feature type="chain" id="PRO_0000365546" description="Costars family protein">
    <location>
        <begin position="1"/>
        <end position="87"/>
    </location>
</feature>